<reference key="1">
    <citation type="journal article" date="1991" name="Biochim. Biophys. Acta">
        <title>Cloning and sequencing of the gene cluster encoding two subunits of membrane-bound alcohol dehydrogenase from Acetobacter polyoxogenes.</title>
        <authorList>
            <person name="Tamaki T."/>
            <person name="Fukaya M."/>
            <person name="Takemura H."/>
            <person name="Tayama K."/>
            <person name="Okumura H."/>
            <person name="Kawamura Y."/>
            <person name="Nishiyama M."/>
            <person name="Horinouchi S."/>
            <person name="Beppu T."/>
        </authorList>
    </citation>
    <scope>NUCLEOTIDE SEQUENCE [GENOMIC DNA]</scope>
    <scope>PROTEIN SEQUENCE OF 267-279 AND 389-401</scope>
    <scope>FUNCTION</scope>
    <scope>SUBUNIT</scope>
    <source>
        <strain>NBI1028</strain>
    </source>
</reference>
<sequence length="738" mass="80841">MISAVFGKRRSLSRTLTAGTICAALISGYATMASADDGQGATGEAIIHADDHPGNWMTYGRTYSDQRYSPLDQINRSNVGNLKLAWYLDLDTNRGQEGTPLVIDGVMYATTNWSMMKAVDAATGKLLWSYDPRVPGNIADKGCCDTVNRGAAYWNGKVYFGTFDGRLIALDAKTGKLVWSVNTIPPEAELGKQRSYTVDGAPRIAKGRVIIGNGGSEFGARGFVSAFDAETGKVDWRFFTVPNPKNEPDAASDSVLMNKAYQTWSPTGAWTRQGGGGTVWDSIVYDPVADLVYLGVGNGSPWNYKYRSEGKGDNLFLGSIVALKPETGEYVWHFQETPMDQWDFTSDQQIMTLDLPINGETRHVIVHARKNGFFYIIDAKTGEFISGKNYVYVNWASGLDPKTGRPIYNPDALYTLTGKEWYGIPGDLGGHNFAAMAFSPKTGLVYIPAQQVPFLYTNQVGGFTPHPDSWNLGLDMNKVGIPDSPEAKQAFVKDLKGWIVAWDPQKQAEAWRVDHKGPWNGGILATGGDLLFQGLANGEFHAYDATNGSDLFHFAADSGIIAPPVTYLANGKQYVAVEVGWGGIYPFFLGGLARTSGWTVNHSRIIAFSLDGKSGPLPKQNDQGFLPVKPPAQFDSKRTDNGYFQFQTYCAACHGDNAEGAGVLPDLRWSGSIRHEDAFYNVVGRGALTAYGMDRLHGNMNPTEIEDIRQFLIKRANETYQREVDARKNADGIPEQLP</sequence>
<proteinExistence type="evidence at protein level"/>
<comment type="function">
    <text evidence="1 5">Dehydrogenase component of the alcohol dehydrogenase multicomponent enzyme system which is involved in the production of acetic acid and in the ethanol oxidase respiratory chain (By similarity). Quinohemoprotein alcohol dehydrogenase (ADH) catalyzes the oxidation of ethanol to acetaldehyde by transferring electrons to the ubiquinone embedded in the membrane phospholipids (PubMed:2001402). The electrons transfer from ethanol to membranous ubiquinone occurs from pyrroloquinoline quinone (PQQ) to one heme c in subunit I (AdhA), and finally to two heme c in subunit II (AdhB) (By similarity). Besides ubiquinone reduction, ADH also has a ubiquinol (QH2) oxidation reaction which mediates electron transfer from ubiquinol to the non-energy generating bypass oxidase system (By similarity). The electrons transfer occurs from ubiquinol (QH2) to the additional heme c within subunit II (AdhB) (By similarity).</text>
</comment>
<comment type="catalytic activity">
    <reaction evidence="1">
        <text>ethanol + a ubiquinone = a ubiquinol + acetaldehyde</text>
        <dbReference type="Rhea" id="RHEA:26442"/>
        <dbReference type="Rhea" id="RHEA-COMP:9565"/>
        <dbReference type="Rhea" id="RHEA-COMP:9566"/>
        <dbReference type="ChEBI" id="CHEBI:15343"/>
        <dbReference type="ChEBI" id="CHEBI:16236"/>
        <dbReference type="ChEBI" id="CHEBI:16389"/>
        <dbReference type="ChEBI" id="CHEBI:17976"/>
        <dbReference type="EC" id="1.1.5.5"/>
    </reaction>
</comment>
<comment type="cofactor">
    <cofactor evidence="1">
        <name>pyrroloquinoline quinone</name>
        <dbReference type="ChEBI" id="CHEBI:58442"/>
    </cofactor>
    <text evidence="1">Binds 1 PQQ group per subunit.</text>
</comment>
<comment type="cofactor">
    <cofactor evidence="1">
        <name>Ca(2+)</name>
        <dbReference type="ChEBI" id="CHEBI:29108"/>
    </cofactor>
    <text evidence="2">Binds 1 Ca(2+) ion per subunit.</text>
</comment>
<comment type="cofactor">
    <cofactor evidence="1">
        <name>heme c</name>
        <dbReference type="ChEBI" id="CHEBI:61717"/>
    </cofactor>
    <text evidence="1">Binds 1 heme c group covalently per subunit.</text>
</comment>
<comment type="subunit">
    <text evidence="8">The alcohol dehydrogenase multicomponent enzyme system is composed of a dehydrogenase subunit I (AdhA) and a cytochrome c subunit II (AdhB).</text>
</comment>
<comment type="subcellular location">
    <subcellularLocation>
        <location evidence="7">Cell membrane</location>
        <topology evidence="7">Peripheral membrane protein</topology>
        <orientation evidence="7">Periplasmic side</orientation>
    </subcellularLocation>
</comment>
<comment type="similarity">
    <text evidence="7">Belongs to the bacterial PQQ dehydrogenase family.</text>
</comment>
<evidence type="ECO:0000250" key="1">
    <source>
        <dbReference type="UniProtKB" id="O05542"/>
    </source>
</evidence>
<evidence type="ECO:0000250" key="2">
    <source>
        <dbReference type="UniProtKB" id="Q8GR64"/>
    </source>
</evidence>
<evidence type="ECO:0000255" key="3"/>
<evidence type="ECO:0000255" key="4">
    <source>
        <dbReference type="PROSITE-ProRule" id="PRU00433"/>
    </source>
</evidence>
<evidence type="ECO:0000269" key="5">
    <source>
    </source>
</evidence>
<evidence type="ECO:0000303" key="6">
    <source>
    </source>
</evidence>
<evidence type="ECO:0000305" key="7"/>
<evidence type="ECO:0000305" key="8">
    <source>
    </source>
</evidence>
<keyword id="KW-0106">Calcium</keyword>
<keyword id="KW-1003">Cell membrane</keyword>
<keyword id="KW-0903">Direct protein sequencing</keyword>
<keyword id="KW-1015">Disulfide bond</keyword>
<keyword id="KW-0249">Electron transport</keyword>
<keyword id="KW-0349">Heme</keyword>
<keyword id="KW-0408">Iron</keyword>
<keyword id="KW-0472">Membrane</keyword>
<keyword id="KW-0479">Metal-binding</keyword>
<keyword id="KW-0560">Oxidoreductase</keyword>
<keyword id="KW-0634">PQQ</keyword>
<keyword id="KW-0679">Respiratory chain</keyword>
<keyword id="KW-0732">Signal</keyword>
<keyword id="KW-0813">Transport</keyword>
<name>ADHA_GLUPO</name>
<feature type="signal peptide" evidence="3">
    <location>
        <begin position="1"/>
        <end position="35"/>
    </location>
</feature>
<feature type="chain" id="PRO_0000025561" description="Alcohol dehydrogenase (quinone), dehydrogenase subunit">
    <location>
        <begin position="36"/>
        <end position="738"/>
    </location>
</feature>
<feature type="domain" description="Cytochrome c" evidence="4">
    <location>
        <begin position="634"/>
        <end position="738"/>
    </location>
</feature>
<feature type="active site" description="Proton acceptor" evidence="2">
    <location>
        <position position="343"/>
    </location>
</feature>
<feature type="binding site" evidence="2">
    <location>
        <position position="97"/>
    </location>
    <ligand>
        <name>pyrroloquinoline quinone</name>
        <dbReference type="ChEBI" id="CHEBI:58442"/>
    </ligand>
</feature>
<feature type="binding site" evidence="2">
    <location>
        <position position="149"/>
    </location>
    <ligand>
        <name>pyrroloquinoline quinone</name>
        <dbReference type="ChEBI" id="CHEBI:58442"/>
    </ligand>
</feature>
<feature type="binding site" evidence="2">
    <location>
        <position position="217"/>
    </location>
    <ligand>
        <name>Ca(2+)</name>
        <dbReference type="ChEBI" id="CHEBI:29108"/>
    </ligand>
</feature>
<feature type="binding site" evidence="2">
    <location>
        <position position="278"/>
    </location>
    <ligand>
        <name>pyrroloquinoline quinone</name>
        <dbReference type="ChEBI" id="CHEBI:58442"/>
    </ligand>
</feature>
<feature type="binding site" evidence="2">
    <location>
        <position position="298"/>
    </location>
    <ligand>
        <name>Ca(2+)</name>
        <dbReference type="ChEBI" id="CHEBI:29108"/>
    </ligand>
</feature>
<feature type="binding site" evidence="2">
    <location>
        <position position="343"/>
    </location>
    <ligand>
        <name>Ca(2+)</name>
        <dbReference type="ChEBI" id="CHEBI:29108"/>
    </ligand>
</feature>
<feature type="binding site" evidence="2">
    <location>
        <position position="370"/>
    </location>
    <ligand>
        <name>pyrroloquinoline quinone</name>
        <dbReference type="ChEBI" id="CHEBI:58442"/>
    </ligand>
</feature>
<feature type="binding site" evidence="2">
    <location>
        <position position="584"/>
    </location>
    <ligand>
        <name>pyrroloquinoline quinone</name>
        <dbReference type="ChEBI" id="CHEBI:58442"/>
    </ligand>
</feature>
<feature type="binding site" description="covalent" evidence="2">
    <location>
        <position position="650"/>
    </location>
    <ligand>
        <name>heme c</name>
        <dbReference type="ChEBI" id="CHEBI:61717"/>
    </ligand>
</feature>
<feature type="binding site" description="covalent" evidence="2">
    <location>
        <position position="653"/>
    </location>
    <ligand>
        <name>heme c</name>
        <dbReference type="ChEBI" id="CHEBI:61717"/>
    </ligand>
</feature>
<feature type="binding site" description="axial binding residue" evidence="2">
    <location>
        <position position="654"/>
    </location>
    <ligand>
        <name>heme c</name>
        <dbReference type="ChEBI" id="CHEBI:61717"/>
    </ligand>
    <ligandPart>
        <name>Fe</name>
        <dbReference type="ChEBI" id="CHEBI:18248"/>
    </ligandPart>
</feature>
<feature type="binding site" description="axial binding residue" evidence="2">
    <location>
        <position position="693"/>
    </location>
    <ligand>
        <name>heme c</name>
        <dbReference type="ChEBI" id="CHEBI:61717"/>
    </ligand>
    <ligandPart>
        <name>Fe</name>
        <dbReference type="ChEBI" id="CHEBI:18248"/>
    </ligandPart>
</feature>
<feature type="disulfide bond" evidence="2">
    <location>
        <begin position="143"/>
        <end position="144"/>
    </location>
</feature>
<gene>
    <name type="primary">adhA</name>
</gene>
<organism>
    <name type="scientific">Gluconacetobacter polyoxogenes</name>
    <name type="common">Acetobacter polyoxogenes</name>
    <dbReference type="NCBI Taxonomy" id="439"/>
    <lineage>
        <taxon>Bacteria</taxon>
        <taxon>Pseudomonadati</taxon>
        <taxon>Pseudomonadota</taxon>
        <taxon>Alphaproteobacteria</taxon>
        <taxon>Acetobacterales</taxon>
        <taxon>Acetobacteraceae</taxon>
        <taxon>Gluconacetobacter</taxon>
    </lineage>
</organism>
<protein>
    <recommendedName>
        <fullName evidence="6">Alcohol dehydrogenase (quinone), dehydrogenase subunit</fullName>
        <shortName evidence="6">ADH</shortName>
        <ecNumber evidence="1">1.1.5.5</ecNumber>
    </recommendedName>
    <alternativeName>
        <fullName evidence="1">Alcohol dehydrogenase (quinone), acceptor subunit</fullName>
    </alternativeName>
    <alternativeName>
        <fullName evidence="1">Alcohol dehydrogenase (quinone), subunit I</fullName>
    </alternativeName>
    <alternativeName>
        <fullName evidence="1">Ethanol:Q2 reductase</fullName>
    </alternativeName>
    <alternativeName>
        <fullName evidence="1">G3-ADH subunit I</fullName>
    </alternativeName>
    <alternativeName>
        <fullName evidence="1">Quinohemoprotein alcohol dehydrogenase</fullName>
    </alternativeName>
    <alternativeName>
        <fullName evidence="1">Quinohemoprotein-cytochrome c complex</fullName>
    </alternativeName>
    <alternativeName>
        <fullName evidence="1">Ubiquinol oxidase</fullName>
    </alternativeName>
</protein>
<accession>P28036</accession>
<dbReference type="EC" id="1.1.5.5" evidence="1"/>
<dbReference type="EMBL" id="D00635">
    <property type="protein sequence ID" value="BAA00528.1"/>
    <property type="molecule type" value="Genomic_DNA"/>
</dbReference>
<dbReference type="PIR" id="S14270">
    <property type="entry name" value="S14270"/>
</dbReference>
<dbReference type="SMR" id="P28036"/>
<dbReference type="GO" id="GO:0030288">
    <property type="term" value="C:outer membrane-bounded periplasmic space"/>
    <property type="evidence" value="ECO:0007669"/>
    <property type="project" value="InterPro"/>
</dbReference>
<dbReference type="GO" id="GO:0005886">
    <property type="term" value="C:plasma membrane"/>
    <property type="evidence" value="ECO:0007669"/>
    <property type="project" value="UniProtKB-SubCell"/>
</dbReference>
<dbReference type="GO" id="GO:0005509">
    <property type="term" value="F:calcium ion binding"/>
    <property type="evidence" value="ECO:0007669"/>
    <property type="project" value="InterPro"/>
</dbReference>
<dbReference type="GO" id="GO:0009055">
    <property type="term" value="F:electron transfer activity"/>
    <property type="evidence" value="ECO:0007669"/>
    <property type="project" value="InterPro"/>
</dbReference>
<dbReference type="GO" id="GO:0020037">
    <property type="term" value="F:heme binding"/>
    <property type="evidence" value="ECO:0007669"/>
    <property type="project" value="InterPro"/>
</dbReference>
<dbReference type="GO" id="GO:0016614">
    <property type="term" value="F:oxidoreductase activity, acting on CH-OH group of donors"/>
    <property type="evidence" value="ECO:0007669"/>
    <property type="project" value="InterPro"/>
</dbReference>
<dbReference type="CDD" id="cd10279">
    <property type="entry name" value="PQQ_ADH_II"/>
    <property type="match status" value="1"/>
</dbReference>
<dbReference type="Gene3D" id="1.10.760.10">
    <property type="entry name" value="Cytochrome c-like domain"/>
    <property type="match status" value="1"/>
</dbReference>
<dbReference type="Gene3D" id="2.140.10.10">
    <property type="entry name" value="Quinoprotein alcohol dehydrogenase-like superfamily"/>
    <property type="match status" value="1"/>
</dbReference>
<dbReference type="InterPro" id="IPR009056">
    <property type="entry name" value="Cyt_c-like_dom"/>
</dbReference>
<dbReference type="InterPro" id="IPR036909">
    <property type="entry name" value="Cyt_c-like_dom_sf"/>
</dbReference>
<dbReference type="InterPro" id="IPR018391">
    <property type="entry name" value="PQQ_b-propeller_rpt"/>
</dbReference>
<dbReference type="InterPro" id="IPR017512">
    <property type="entry name" value="PQQ_MeOH/EtOH_DH"/>
</dbReference>
<dbReference type="InterPro" id="IPR002372">
    <property type="entry name" value="PQQ_rpt_dom"/>
</dbReference>
<dbReference type="InterPro" id="IPR011047">
    <property type="entry name" value="Quinoprotein_ADH-like_sf"/>
</dbReference>
<dbReference type="InterPro" id="IPR001479">
    <property type="entry name" value="Quinoprotein_DH_CS"/>
</dbReference>
<dbReference type="NCBIfam" id="TIGR03075">
    <property type="entry name" value="PQQ_enz_alc_DH"/>
    <property type="match status" value="1"/>
</dbReference>
<dbReference type="PANTHER" id="PTHR32303">
    <property type="entry name" value="QUINOPROTEIN ALCOHOL DEHYDROGENASE (CYTOCHROME C)"/>
    <property type="match status" value="1"/>
</dbReference>
<dbReference type="Pfam" id="PF01011">
    <property type="entry name" value="PQQ"/>
    <property type="match status" value="1"/>
</dbReference>
<dbReference type="Pfam" id="PF13360">
    <property type="entry name" value="PQQ_2"/>
    <property type="match status" value="1"/>
</dbReference>
<dbReference type="SMART" id="SM00564">
    <property type="entry name" value="PQQ"/>
    <property type="match status" value="6"/>
</dbReference>
<dbReference type="SUPFAM" id="SSF46626">
    <property type="entry name" value="Cytochrome c"/>
    <property type="match status" value="1"/>
</dbReference>
<dbReference type="SUPFAM" id="SSF50998">
    <property type="entry name" value="Quinoprotein alcohol dehydrogenase-like"/>
    <property type="match status" value="1"/>
</dbReference>
<dbReference type="PROSITE" id="PS00363">
    <property type="entry name" value="BACTERIAL_PQQ_1"/>
    <property type="match status" value="1"/>
</dbReference>
<dbReference type="PROSITE" id="PS00364">
    <property type="entry name" value="BACTERIAL_PQQ_2"/>
    <property type="match status" value="1"/>
</dbReference>
<dbReference type="PROSITE" id="PS51007">
    <property type="entry name" value="CYTC"/>
    <property type="match status" value="1"/>
</dbReference>